<sequence length="223" mass="24769">MKPIIPPQNLSELLERANMMAGISLAQIAAHRGITVPKDLKRDKGWVGQLIEMELGATAGSKPEQDFLHLGVELKTIPIDSKGKPLETTYVCVAPLTNIEGLTWQDSLVCHKLQRVLWVPVEGERHIPVGERRVGTPILWEPDQQELALLQQDWEEIMELIALGKVEKLTARHGEVLQLRPKAANSKALTQSIAEDGGLKMTNPRGFYLKTAFTAMLLNKVFG</sequence>
<organism>
    <name type="scientific">Shewanella sp. (strain MR-7)</name>
    <dbReference type="NCBI Taxonomy" id="60481"/>
    <lineage>
        <taxon>Bacteria</taxon>
        <taxon>Pseudomonadati</taxon>
        <taxon>Pseudomonadota</taxon>
        <taxon>Gammaproteobacteria</taxon>
        <taxon>Alteromonadales</taxon>
        <taxon>Shewanellaceae</taxon>
        <taxon>Shewanella</taxon>
    </lineage>
</organism>
<evidence type="ECO:0000255" key="1">
    <source>
        <dbReference type="HAMAP-Rule" id="MF_00759"/>
    </source>
</evidence>
<reference key="1">
    <citation type="submission" date="2006-08" db="EMBL/GenBank/DDBJ databases">
        <title>Complete sequence of chromosome 1 of Shewanella sp. MR-7.</title>
        <authorList>
            <person name="Copeland A."/>
            <person name="Lucas S."/>
            <person name="Lapidus A."/>
            <person name="Barry K."/>
            <person name="Detter J.C."/>
            <person name="Glavina del Rio T."/>
            <person name="Hammon N."/>
            <person name="Israni S."/>
            <person name="Dalin E."/>
            <person name="Tice H."/>
            <person name="Pitluck S."/>
            <person name="Kiss H."/>
            <person name="Brettin T."/>
            <person name="Bruce D."/>
            <person name="Han C."/>
            <person name="Tapia R."/>
            <person name="Gilna P."/>
            <person name="Schmutz J."/>
            <person name="Larimer F."/>
            <person name="Land M."/>
            <person name="Hauser L."/>
            <person name="Kyrpides N."/>
            <person name="Mikhailova N."/>
            <person name="Nealson K."/>
            <person name="Konstantinidis K."/>
            <person name="Klappenbach J."/>
            <person name="Tiedje J."/>
            <person name="Richardson P."/>
        </authorList>
    </citation>
    <scope>NUCLEOTIDE SEQUENCE [LARGE SCALE GENOMIC DNA]</scope>
    <source>
        <strain>MR-7</strain>
    </source>
</reference>
<keyword id="KW-0963">Cytoplasm</keyword>
<keyword id="KW-0227">DNA damage</keyword>
<keyword id="KW-0234">DNA repair</keyword>
<keyword id="KW-0255">Endonuclease</keyword>
<keyword id="KW-0378">Hydrolase</keyword>
<keyword id="KW-0540">Nuclease</keyword>
<gene>
    <name evidence="1" type="primary">mutH</name>
    <name type="ordered locus">Shewmr7_2948</name>
</gene>
<accession>Q0HSH3</accession>
<comment type="function">
    <text evidence="1">Sequence-specific endonuclease that cleaves unmethylated GATC sequences. It is involved in DNA mismatch repair.</text>
</comment>
<comment type="subcellular location">
    <subcellularLocation>
        <location evidence="1">Cytoplasm</location>
    </subcellularLocation>
</comment>
<comment type="similarity">
    <text evidence="1">Belongs to the MutH family.</text>
</comment>
<dbReference type="EMBL" id="CP000444">
    <property type="protein sequence ID" value="ABI43932.1"/>
    <property type="molecule type" value="Genomic_DNA"/>
</dbReference>
<dbReference type="SMR" id="Q0HSH3"/>
<dbReference type="KEGG" id="shm:Shewmr7_2948"/>
<dbReference type="HOGENOM" id="CLU_086669_0_0_6"/>
<dbReference type="GO" id="GO:0005737">
    <property type="term" value="C:cytoplasm"/>
    <property type="evidence" value="ECO:0007669"/>
    <property type="project" value="UniProtKB-SubCell"/>
</dbReference>
<dbReference type="GO" id="GO:0003677">
    <property type="term" value="F:DNA binding"/>
    <property type="evidence" value="ECO:0007669"/>
    <property type="project" value="InterPro"/>
</dbReference>
<dbReference type="GO" id="GO:0004519">
    <property type="term" value="F:endonuclease activity"/>
    <property type="evidence" value="ECO:0007669"/>
    <property type="project" value="UniProtKB-UniRule"/>
</dbReference>
<dbReference type="GO" id="GO:0006304">
    <property type="term" value="P:DNA modification"/>
    <property type="evidence" value="ECO:0007669"/>
    <property type="project" value="InterPro"/>
</dbReference>
<dbReference type="GO" id="GO:0006298">
    <property type="term" value="P:mismatch repair"/>
    <property type="evidence" value="ECO:0007669"/>
    <property type="project" value="UniProtKB-UniRule"/>
</dbReference>
<dbReference type="CDD" id="cd00583">
    <property type="entry name" value="MutH-like"/>
    <property type="match status" value="1"/>
</dbReference>
<dbReference type="Gene3D" id="3.40.600.10">
    <property type="entry name" value="DNA mismatch repair MutH/Restriction endonuclease, type II"/>
    <property type="match status" value="1"/>
</dbReference>
<dbReference type="HAMAP" id="MF_00759">
    <property type="entry name" value="MutH"/>
    <property type="match status" value="1"/>
</dbReference>
<dbReference type="InterPro" id="IPR004230">
    <property type="entry name" value="DNA_mismatch_repair_MutH"/>
</dbReference>
<dbReference type="InterPro" id="IPR011337">
    <property type="entry name" value="DNA_rep_MutH/RE_typeII_Sau3AI"/>
</dbReference>
<dbReference type="InterPro" id="IPR037057">
    <property type="entry name" value="DNA_rep_MutH/T2_RE_sf"/>
</dbReference>
<dbReference type="InterPro" id="IPR011335">
    <property type="entry name" value="Restrct_endonuc-II-like"/>
</dbReference>
<dbReference type="NCBIfam" id="TIGR02248">
    <property type="entry name" value="mutH_TIGR"/>
    <property type="match status" value="1"/>
</dbReference>
<dbReference type="NCBIfam" id="NF003458">
    <property type="entry name" value="PRK05070.1"/>
    <property type="match status" value="1"/>
</dbReference>
<dbReference type="Pfam" id="PF02976">
    <property type="entry name" value="MutH"/>
    <property type="match status" value="1"/>
</dbReference>
<dbReference type="SMART" id="SM00927">
    <property type="entry name" value="MutH"/>
    <property type="match status" value="1"/>
</dbReference>
<dbReference type="SUPFAM" id="SSF52980">
    <property type="entry name" value="Restriction endonuclease-like"/>
    <property type="match status" value="1"/>
</dbReference>
<feature type="chain" id="PRO_1000046711" description="DNA mismatch repair protein MutH">
    <location>
        <begin position="1"/>
        <end position="223"/>
    </location>
</feature>
<proteinExistence type="inferred from homology"/>
<name>MUTH_SHESR</name>
<protein>
    <recommendedName>
        <fullName evidence="1">DNA mismatch repair protein MutH</fullName>
    </recommendedName>
    <alternativeName>
        <fullName evidence="1">Methyl-directed mismatch repair protein</fullName>
    </alternativeName>
</protein>